<name>RHBL2_HUMAN</name>
<gene>
    <name type="primary">RHBDL2</name>
</gene>
<keyword id="KW-0025">Alternative splicing</keyword>
<keyword id="KW-1003">Cell membrane</keyword>
<keyword id="KW-0378">Hydrolase</keyword>
<keyword id="KW-0472">Membrane</keyword>
<keyword id="KW-0645">Protease</keyword>
<keyword id="KW-1267">Proteomics identification</keyword>
<keyword id="KW-1185">Reference proteome</keyword>
<keyword id="KW-0720">Serine protease</keyword>
<keyword id="KW-0812">Transmembrane</keyword>
<keyword id="KW-1133">Transmembrane helix</keyword>
<comment type="function">
    <text evidence="3 4">Involved in regulated intramembrane proteolysis and the subsequent release of functional polypeptides from their membrane anchors. Known substrate: EFNB3.</text>
</comment>
<comment type="catalytic activity">
    <reaction evidence="5">
        <text>Cleaves type-1 transmembrane domains using a catalytic dyad composed of serine and histidine that are contributed by different transmembrane domains.</text>
        <dbReference type="EC" id="3.4.21.105"/>
    </reaction>
</comment>
<comment type="interaction">
    <interactant intactId="EBI-12908426">
        <id>Q9NX52-3</id>
    </interactant>
    <interactant intactId="EBI-10281213">
        <id>Q969S0</id>
        <label>SLC35B4</label>
    </interactant>
    <organismsDiffer>false</organismsDiffer>
    <experiments>3</experiments>
</comment>
<comment type="interaction">
    <interactant intactId="EBI-12908426">
        <id>Q9NX52-3</id>
    </interactant>
    <interactant intactId="EBI-1045825">
        <id>P55061</id>
        <label>TMBIM6</label>
    </interactant>
    <organismsDiffer>false</organismsDiffer>
    <experiments>3</experiments>
</comment>
<comment type="subcellular location">
    <molecule>Rhomboid-related protein 2, C-terminal fragment</molecule>
    <subcellularLocation>
        <location evidence="5">Cell membrane</location>
        <topology evidence="1">Multi-pass membrane protein</topology>
    </subcellularLocation>
</comment>
<comment type="alternative products">
    <event type="alternative splicing"/>
    <isoform>
        <id>Q9NX52-1</id>
        <name>1</name>
        <sequence type="displayed"/>
    </isoform>
    <isoform>
        <id>Q9NX52-3</id>
        <name>2</name>
        <sequence type="described" ref="VSP_012692"/>
    </isoform>
</comment>
<comment type="PTM">
    <text evidence="5">Proteolytic processing of the proenzyme produces a N-terminal fragment (NTF) and a C-terminal fragment (CTF). The processing is required for activation of the protease.</text>
</comment>
<comment type="miscellaneous">
    <molecule>Isoform 2</molecule>
    <text evidence="7">May be due to an intron retention.</text>
</comment>
<comment type="similarity">
    <text evidence="7">Belongs to the peptidase S54 family.</text>
</comment>
<comment type="sequence caution" evidence="7">
    <conflict type="erroneous initiation">
        <sequence resource="EMBL-CDS" id="AAH13103"/>
    </conflict>
    <text>Truncated N-terminus.</text>
</comment>
<comment type="sequence caution" evidence="7">
    <conflict type="erroneous initiation">
        <sequence resource="EMBL-CDS" id="BAA91168"/>
    </conflict>
    <text>Truncated N-terminus.</text>
</comment>
<accession>Q9NX52</accession>
<accession>B2RNT3</accession>
<accession>B9EH75</accession>
<accession>Q6P175</accession>
<accession>Q8NER8</accession>
<accession>Q96E02</accession>
<organism>
    <name type="scientific">Homo sapiens</name>
    <name type="common">Human</name>
    <dbReference type="NCBI Taxonomy" id="9606"/>
    <lineage>
        <taxon>Eukaryota</taxon>
        <taxon>Metazoa</taxon>
        <taxon>Chordata</taxon>
        <taxon>Craniata</taxon>
        <taxon>Vertebrata</taxon>
        <taxon>Euteleostomi</taxon>
        <taxon>Mammalia</taxon>
        <taxon>Eutheria</taxon>
        <taxon>Euarchontoglires</taxon>
        <taxon>Primates</taxon>
        <taxon>Haplorrhini</taxon>
        <taxon>Catarrhini</taxon>
        <taxon>Hominidae</taxon>
        <taxon>Homo</taxon>
    </lineage>
</organism>
<proteinExistence type="evidence at protein level"/>
<reference key="1">
    <citation type="submission" date="2002-06" db="EMBL/GenBank/DDBJ databases">
        <title>Cloning and characterization of RHBDL2, a novel rhomboid-like gene, in human development.</title>
        <authorList>
            <person name="Jiao W."/>
            <person name="Yuan W."/>
            <person name="Wu X."/>
        </authorList>
    </citation>
    <scope>NUCLEOTIDE SEQUENCE [MRNA] (ISOFORM 1)</scope>
</reference>
<reference key="2">
    <citation type="journal article" date="2006" name="Nature">
        <title>The DNA sequence and biological annotation of human chromosome 1.</title>
        <authorList>
            <person name="Gregory S.G."/>
            <person name="Barlow K.F."/>
            <person name="McLay K.E."/>
            <person name="Kaul R."/>
            <person name="Swarbreck D."/>
            <person name="Dunham A."/>
            <person name="Scott C.E."/>
            <person name="Howe K.L."/>
            <person name="Woodfine K."/>
            <person name="Spencer C.C.A."/>
            <person name="Jones M.C."/>
            <person name="Gillson C."/>
            <person name="Searle S."/>
            <person name="Zhou Y."/>
            <person name="Kokocinski F."/>
            <person name="McDonald L."/>
            <person name="Evans R."/>
            <person name="Phillips K."/>
            <person name="Atkinson A."/>
            <person name="Cooper R."/>
            <person name="Jones C."/>
            <person name="Hall R.E."/>
            <person name="Andrews T.D."/>
            <person name="Lloyd C."/>
            <person name="Ainscough R."/>
            <person name="Almeida J.P."/>
            <person name="Ambrose K.D."/>
            <person name="Anderson F."/>
            <person name="Andrew R.W."/>
            <person name="Ashwell R.I.S."/>
            <person name="Aubin K."/>
            <person name="Babbage A.K."/>
            <person name="Bagguley C.L."/>
            <person name="Bailey J."/>
            <person name="Beasley H."/>
            <person name="Bethel G."/>
            <person name="Bird C.P."/>
            <person name="Bray-Allen S."/>
            <person name="Brown J.Y."/>
            <person name="Brown A.J."/>
            <person name="Buckley D."/>
            <person name="Burton J."/>
            <person name="Bye J."/>
            <person name="Carder C."/>
            <person name="Chapman J.C."/>
            <person name="Clark S.Y."/>
            <person name="Clarke G."/>
            <person name="Clee C."/>
            <person name="Cobley V."/>
            <person name="Collier R.E."/>
            <person name="Corby N."/>
            <person name="Coville G.J."/>
            <person name="Davies J."/>
            <person name="Deadman R."/>
            <person name="Dunn M."/>
            <person name="Earthrowl M."/>
            <person name="Ellington A.G."/>
            <person name="Errington H."/>
            <person name="Frankish A."/>
            <person name="Frankland J."/>
            <person name="French L."/>
            <person name="Garner P."/>
            <person name="Garnett J."/>
            <person name="Gay L."/>
            <person name="Ghori M.R.J."/>
            <person name="Gibson R."/>
            <person name="Gilby L.M."/>
            <person name="Gillett W."/>
            <person name="Glithero R.J."/>
            <person name="Grafham D.V."/>
            <person name="Griffiths C."/>
            <person name="Griffiths-Jones S."/>
            <person name="Grocock R."/>
            <person name="Hammond S."/>
            <person name="Harrison E.S.I."/>
            <person name="Hart E."/>
            <person name="Haugen E."/>
            <person name="Heath P.D."/>
            <person name="Holmes S."/>
            <person name="Holt K."/>
            <person name="Howden P.J."/>
            <person name="Hunt A.R."/>
            <person name="Hunt S.E."/>
            <person name="Hunter G."/>
            <person name="Isherwood J."/>
            <person name="James R."/>
            <person name="Johnson C."/>
            <person name="Johnson D."/>
            <person name="Joy A."/>
            <person name="Kay M."/>
            <person name="Kershaw J.K."/>
            <person name="Kibukawa M."/>
            <person name="Kimberley A.M."/>
            <person name="King A."/>
            <person name="Knights A.J."/>
            <person name="Lad H."/>
            <person name="Laird G."/>
            <person name="Lawlor S."/>
            <person name="Leongamornlert D.A."/>
            <person name="Lloyd D.M."/>
            <person name="Loveland J."/>
            <person name="Lovell J."/>
            <person name="Lush M.J."/>
            <person name="Lyne R."/>
            <person name="Martin S."/>
            <person name="Mashreghi-Mohammadi M."/>
            <person name="Matthews L."/>
            <person name="Matthews N.S.W."/>
            <person name="McLaren S."/>
            <person name="Milne S."/>
            <person name="Mistry S."/>
            <person name="Moore M.J.F."/>
            <person name="Nickerson T."/>
            <person name="O'Dell C.N."/>
            <person name="Oliver K."/>
            <person name="Palmeiri A."/>
            <person name="Palmer S.A."/>
            <person name="Parker A."/>
            <person name="Patel D."/>
            <person name="Pearce A.V."/>
            <person name="Peck A.I."/>
            <person name="Pelan S."/>
            <person name="Phelps K."/>
            <person name="Phillimore B.J."/>
            <person name="Plumb R."/>
            <person name="Rajan J."/>
            <person name="Raymond C."/>
            <person name="Rouse G."/>
            <person name="Saenphimmachak C."/>
            <person name="Sehra H.K."/>
            <person name="Sheridan E."/>
            <person name="Shownkeen R."/>
            <person name="Sims S."/>
            <person name="Skuce C.D."/>
            <person name="Smith M."/>
            <person name="Steward C."/>
            <person name="Subramanian S."/>
            <person name="Sycamore N."/>
            <person name="Tracey A."/>
            <person name="Tromans A."/>
            <person name="Van Helmond Z."/>
            <person name="Wall M."/>
            <person name="Wallis J.M."/>
            <person name="White S."/>
            <person name="Whitehead S.L."/>
            <person name="Wilkinson J.E."/>
            <person name="Willey D.L."/>
            <person name="Williams H."/>
            <person name="Wilming L."/>
            <person name="Wray P.W."/>
            <person name="Wu Z."/>
            <person name="Coulson A."/>
            <person name="Vaudin M."/>
            <person name="Sulston J.E."/>
            <person name="Durbin R.M."/>
            <person name="Hubbard T."/>
            <person name="Wooster R."/>
            <person name="Dunham I."/>
            <person name="Carter N.P."/>
            <person name="McVean G."/>
            <person name="Ross M.T."/>
            <person name="Harrow J."/>
            <person name="Olson M.V."/>
            <person name="Beck S."/>
            <person name="Rogers J."/>
            <person name="Bentley D.R."/>
        </authorList>
    </citation>
    <scope>NUCLEOTIDE SEQUENCE [LARGE SCALE GENOMIC DNA]</scope>
</reference>
<reference key="3">
    <citation type="journal article" date="2004" name="Genome Res.">
        <title>The status, quality, and expansion of the NIH full-length cDNA project: the Mammalian Gene Collection (MGC).</title>
        <authorList>
            <consortium name="The MGC Project Team"/>
        </authorList>
    </citation>
    <scope>NUCLEOTIDE SEQUENCE [LARGE SCALE MRNA] (ISOFORMS 1 AND 2)</scope>
    <source>
        <tissue>Adrenal cortex</tissue>
        <tissue>Testis</tissue>
    </source>
</reference>
<reference key="4">
    <citation type="journal article" date="2004" name="Nat. Genet.">
        <title>Complete sequencing and characterization of 21,243 full-length human cDNAs.</title>
        <authorList>
            <person name="Ota T."/>
            <person name="Suzuki Y."/>
            <person name="Nishikawa T."/>
            <person name="Otsuki T."/>
            <person name="Sugiyama T."/>
            <person name="Irie R."/>
            <person name="Wakamatsu A."/>
            <person name="Hayashi K."/>
            <person name="Sato H."/>
            <person name="Nagai K."/>
            <person name="Kimura K."/>
            <person name="Makita H."/>
            <person name="Sekine M."/>
            <person name="Obayashi M."/>
            <person name="Nishi T."/>
            <person name="Shibahara T."/>
            <person name="Tanaka T."/>
            <person name="Ishii S."/>
            <person name="Yamamoto J."/>
            <person name="Saito K."/>
            <person name="Kawai Y."/>
            <person name="Isono Y."/>
            <person name="Nakamura Y."/>
            <person name="Nagahari K."/>
            <person name="Murakami K."/>
            <person name="Yasuda T."/>
            <person name="Iwayanagi T."/>
            <person name="Wagatsuma M."/>
            <person name="Shiratori A."/>
            <person name="Sudo H."/>
            <person name="Hosoiri T."/>
            <person name="Kaku Y."/>
            <person name="Kodaira H."/>
            <person name="Kondo H."/>
            <person name="Sugawara M."/>
            <person name="Takahashi M."/>
            <person name="Kanda K."/>
            <person name="Yokoi T."/>
            <person name="Furuya T."/>
            <person name="Kikkawa E."/>
            <person name="Omura Y."/>
            <person name="Abe K."/>
            <person name="Kamihara K."/>
            <person name="Katsuta N."/>
            <person name="Sato K."/>
            <person name="Tanikawa M."/>
            <person name="Yamazaki M."/>
            <person name="Ninomiya K."/>
            <person name="Ishibashi T."/>
            <person name="Yamashita H."/>
            <person name="Murakawa K."/>
            <person name="Fujimori K."/>
            <person name="Tanai H."/>
            <person name="Kimata M."/>
            <person name="Watanabe M."/>
            <person name="Hiraoka S."/>
            <person name="Chiba Y."/>
            <person name="Ishida S."/>
            <person name="Ono Y."/>
            <person name="Takiguchi S."/>
            <person name="Watanabe S."/>
            <person name="Yosida M."/>
            <person name="Hotuta T."/>
            <person name="Kusano J."/>
            <person name="Kanehori K."/>
            <person name="Takahashi-Fujii A."/>
            <person name="Hara H."/>
            <person name="Tanase T.-O."/>
            <person name="Nomura Y."/>
            <person name="Togiya S."/>
            <person name="Komai F."/>
            <person name="Hara R."/>
            <person name="Takeuchi K."/>
            <person name="Arita M."/>
            <person name="Imose N."/>
            <person name="Musashino K."/>
            <person name="Yuuki H."/>
            <person name="Oshima A."/>
            <person name="Sasaki N."/>
            <person name="Aotsuka S."/>
            <person name="Yoshikawa Y."/>
            <person name="Matsunawa H."/>
            <person name="Ichihara T."/>
            <person name="Shiohata N."/>
            <person name="Sano S."/>
            <person name="Moriya S."/>
            <person name="Momiyama H."/>
            <person name="Satoh N."/>
            <person name="Takami S."/>
            <person name="Terashima Y."/>
            <person name="Suzuki O."/>
            <person name="Nakagawa S."/>
            <person name="Senoh A."/>
            <person name="Mizoguchi H."/>
            <person name="Goto Y."/>
            <person name="Shimizu F."/>
            <person name="Wakebe H."/>
            <person name="Hishigaki H."/>
            <person name="Watanabe T."/>
            <person name="Sugiyama A."/>
            <person name="Takemoto M."/>
            <person name="Kawakami B."/>
            <person name="Yamazaki M."/>
            <person name="Watanabe K."/>
            <person name="Kumagai A."/>
            <person name="Itakura S."/>
            <person name="Fukuzumi Y."/>
            <person name="Fujimori Y."/>
            <person name="Komiyama M."/>
            <person name="Tashiro H."/>
            <person name="Tanigami A."/>
            <person name="Fujiwara T."/>
            <person name="Ono T."/>
            <person name="Yamada K."/>
            <person name="Fujii Y."/>
            <person name="Ozaki K."/>
            <person name="Hirao M."/>
            <person name="Ohmori Y."/>
            <person name="Kawabata A."/>
            <person name="Hikiji T."/>
            <person name="Kobatake N."/>
            <person name="Inagaki H."/>
            <person name="Ikema Y."/>
            <person name="Okamoto S."/>
            <person name="Okitani R."/>
            <person name="Kawakami T."/>
            <person name="Noguchi S."/>
            <person name="Itoh T."/>
            <person name="Shigeta K."/>
            <person name="Senba T."/>
            <person name="Matsumura K."/>
            <person name="Nakajima Y."/>
            <person name="Mizuno T."/>
            <person name="Morinaga M."/>
            <person name="Sasaki M."/>
            <person name="Togashi T."/>
            <person name="Oyama M."/>
            <person name="Hata H."/>
            <person name="Watanabe M."/>
            <person name="Komatsu T."/>
            <person name="Mizushima-Sugano J."/>
            <person name="Satoh T."/>
            <person name="Shirai Y."/>
            <person name="Takahashi Y."/>
            <person name="Nakagawa K."/>
            <person name="Okumura K."/>
            <person name="Nagase T."/>
            <person name="Nomura N."/>
            <person name="Kikuchi H."/>
            <person name="Masuho Y."/>
            <person name="Yamashita R."/>
            <person name="Nakai K."/>
            <person name="Yada T."/>
            <person name="Nakamura Y."/>
            <person name="Ohara O."/>
            <person name="Isogai T."/>
            <person name="Sugano S."/>
        </authorList>
    </citation>
    <scope>NUCLEOTIDE SEQUENCE [LARGE SCALE MRNA] OF 11-303 (ISOFORM 1)</scope>
    <source>
        <tissue>Gastric carcinoma</tissue>
    </source>
</reference>
<reference key="5">
    <citation type="journal article" date="2001" name="Cell">
        <title>Drosophila Rhomboid-1 defines a family of putative intramembrane serine proteases.</title>
        <authorList>
            <person name="Urban S."/>
            <person name="Lee J.R."/>
            <person name="Freeman M."/>
        </authorList>
    </citation>
    <scope>FUNCTION</scope>
    <scope>MUTAGENESIS OF TRP-121; ARG-122; ASN-139; GLY-185; SER-187 AND HIS-250</scope>
</reference>
<reference key="6">
    <citation type="journal article" date="2004" name="Biochem. Biophys. Res. Commun.">
        <title>Intramembrane cleavage of ephrinB3 by the human rhomboid family protease, RHBDL2.</title>
        <authorList>
            <person name="Pascall J.C."/>
            <person name="Brown K.D."/>
        </authorList>
    </citation>
    <scope>FUNCTION</scope>
    <scope>MUTAGENESIS OF SER-187</scope>
</reference>
<reference key="7">
    <citation type="journal article" date="2009" name="J. Mol. Biol.">
        <title>The processing of human rhomboid intramembrane serine protease RHBDL2 is required for its proteolytic activity.</title>
        <authorList>
            <person name="Lei X."/>
            <person name="Li Y.M."/>
        </authorList>
    </citation>
    <scope>CATALYTIC ACTIVITY</scope>
    <scope>PROTEOLYTIC PROCESSING</scope>
    <scope>MUTAGENESIS OF TRP-121 AND ARG-122</scope>
    <scope>SUBCELLULAR LOCATION</scope>
</reference>
<sequence>MAAVHDLEMESMNLNMGREMKEELEEEEKMREDGGGKDRAKSKKVHRIVSKWMLPEKSRGTYLERANCFPPPVFIISISLAELAVFIYYAVWKPQKQWITLDTGILESPFIYSPEKREEAWRFISYMLVHAGVQHILGNLCMQLVLGIPLEMVHKGLRVGLVYLAGVIAGSLASSIFDPLRYLVGASGGVYALMGGYFMNVLVNFQEMIPAFGIFRLLIIILIIVLDMGFALYRRFFVPEDGSPVSFAAHIAGGFAGMSIGYTVFSCFDKALLKDPRFWIAIAAYLACVLFAVFFNIFLSPAN</sequence>
<feature type="chain" id="PRO_0000206176" description="Rhomboid-related protein 2">
    <location>
        <begin position="1"/>
        <end position="303"/>
    </location>
</feature>
<feature type="chain" id="PRO_0000408510" description="Rhomboid-related protein 2, N-terminal fragment">
    <location>
        <begin position="1"/>
        <end status="unknown"/>
    </location>
</feature>
<feature type="chain" id="PRO_0000408509" description="Rhomboid-related protein 2, C-terminal fragment">
    <location>
        <begin status="unknown"/>
        <end position="303"/>
    </location>
</feature>
<feature type="transmembrane region" description="Helical" evidence="1">
    <location>
        <begin position="72"/>
        <end position="92"/>
    </location>
</feature>
<feature type="transmembrane region" description="Helical" evidence="1">
    <location>
        <begin position="128"/>
        <end position="148"/>
    </location>
</feature>
<feature type="transmembrane region" description="Helical" evidence="1">
    <location>
        <begin position="159"/>
        <end position="179"/>
    </location>
</feature>
<feature type="transmembrane region" description="Helical" evidence="1">
    <location>
        <begin position="183"/>
        <end position="203"/>
    </location>
</feature>
<feature type="transmembrane region" description="Helical" evidence="1">
    <location>
        <begin position="212"/>
        <end position="232"/>
    </location>
</feature>
<feature type="transmembrane region" description="Helical" evidence="1">
    <location>
        <begin position="245"/>
        <end position="265"/>
    </location>
</feature>
<feature type="transmembrane region" description="Helical" evidence="1">
    <location>
        <begin position="278"/>
        <end position="298"/>
    </location>
</feature>
<feature type="region of interest" description="Disordered" evidence="2">
    <location>
        <begin position="20"/>
        <end position="39"/>
    </location>
</feature>
<feature type="compositionally biased region" description="Basic and acidic residues" evidence="2">
    <location>
        <begin position="28"/>
        <end position="39"/>
    </location>
</feature>
<feature type="active site" description="Nucleophile">
    <location>
        <position position="187"/>
    </location>
</feature>
<feature type="active site">
    <location>
        <position position="250"/>
    </location>
</feature>
<feature type="splice variant" id="VSP_012692" description="In isoform 2." evidence="6">
    <location>
        <begin position="133"/>
        <end position="303"/>
    </location>
</feature>
<feature type="sequence variant" id="VAR_020328" description="In dbSNP:rs2147914.">
    <original>L</original>
    <variation>M</variation>
    <location>
        <position position="273"/>
    </location>
</feature>
<feature type="mutagenesis site" description="Reduces protease activity." evidence="3 5">
    <original>W</original>
    <variation>A</variation>
    <location>
        <position position="121"/>
    </location>
</feature>
<feature type="mutagenesis site" description="Abolishes protease activity, prevents processing and alters localization to the plasma membrane of N-terminal fragment." evidence="3 5">
    <original>R</original>
    <variation>A</variation>
    <location>
        <position position="122"/>
    </location>
</feature>
<feature type="mutagenesis site" description="Reduces protease activity." evidence="3">
    <original>N</original>
    <variation>A</variation>
    <location>
        <position position="139"/>
    </location>
</feature>
<feature type="mutagenesis site" description="Abolishes protease activity." evidence="3">
    <original>G</original>
    <variation>A</variation>
    <location>
        <position position="185"/>
    </location>
</feature>
<feature type="mutagenesis site" description="Abolishes protease activity." evidence="3 4">
    <original>S</original>
    <variation>A</variation>
    <variation>G</variation>
    <location>
        <position position="187"/>
    </location>
</feature>
<feature type="mutagenesis site" description="Abolishes protease activity." evidence="3">
    <original>H</original>
    <variation>A</variation>
    <location>
        <position position="250"/>
    </location>
</feature>
<protein>
    <recommendedName>
        <fullName>Rhomboid-related protein 2</fullName>
        <shortName>RRP2</shortName>
        <ecNumber>3.4.21.105</ecNumber>
    </recommendedName>
    <alternativeName>
        <fullName>Rhomboid-like protein 2</fullName>
    </alternativeName>
    <component>
        <recommendedName>
            <fullName>Rhomboid-related protein 2, N-terminal fragment</fullName>
            <shortName>NTF</shortName>
        </recommendedName>
    </component>
    <component>
        <recommendedName>
            <fullName>Rhomboid-related protein 2, C-terminal fragment</fullName>
            <shortName>CTF</shortName>
        </recommendedName>
    </component>
</protein>
<dbReference type="EC" id="3.4.21.105"/>
<dbReference type="EMBL" id="AY126343">
    <property type="protein sequence ID" value="AAM95697.1"/>
    <property type="molecule type" value="mRNA"/>
</dbReference>
<dbReference type="EMBL" id="AL139260">
    <property type="status" value="NOT_ANNOTATED_CDS"/>
    <property type="molecule type" value="Genomic_DNA"/>
</dbReference>
<dbReference type="EMBL" id="BC013103">
    <property type="protein sequence ID" value="AAH13103.1"/>
    <property type="status" value="ALT_INIT"/>
    <property type="molecule type" value="mRNA"/>
</dbReference>
<dbReference type="EMBL" id="BC137108">
    <property type="protein sequence ID" value="AAI37109.1"/>
    <property type="molecule type" value="mRNA"/>
</dbReference>
<dbReference type="EMBL" id="BC137110">
    <property type="protein sequence ID" value="AAI37111.1"/>
    <property type="molecule type" value="mRNA"/>
</dbReference>
<dbReference type="EMBL" id="AK000442">
    <property type="protein sequence ID" value="BAA91168.1"/>
    <property type="status" value="ALT_INIT"/>
    <property type="molecule type" value="mRNA"/>
</dbReference>
<dbReference type="CCDS" id="CCDS30680.1">
    <molecule id="Q9NX52-1"/>
</dbReference>
<dbReference type="RefSeq" id="NP_060291.2">
    <molecule id="Q9NX52-1"/>
    <property type="nucleotide sequence ID" value="NM_017821.5"/>
</dbReference>
<dbReference type="SMR" id="Q9NX52"/>
<dbReference type="BioGRID" id="120273">
    <property type="interactions" value="8"/>
</dbReference>
<dbReference type="FunCoup" id="Q9NX52">
    <property type="interactions" value="167"/>
</dbReference>
<dbReference type="IntAct" id="Q9NX52">
    <property type="interactions" value="4"/>
</dbReference>
<dbReference type="STRING" id="9606.ENSP00000289248"/>
<dbReference type="MEROPS" id="S54.002"/>
<dbReference type="iPTMnet" id="Q9NX52"/>
<dbReference type="PhosphoSitePlus" id="Q9NX52"/>
<dbReference type="SwissPalm" id="Q9NX52"/>
<dbReference type="BioMuta" id="RHBDL2"/>
<dbReference type="DMDM" id="59800189"/>
<dbReference type="jPOST" id="Q9NX52"/>
<dbReference type="MassIVE" id="Q9NX52"/>
<dbReference type="PaxDb" id="9606-ENSP00000289248"/>
<dbReference type="PeptideAtlas" id="Q9NX52"/>
<dbReference type="ProteomicsDB" id="83039">
    <molecule id="Q9NX52-1"/>
</dbReference>
<dbReference type="ProteomicsDB" id="83040">
    <molecule id="Q9NX52-3"/>
</dbReference>
<dbReference type="Antibodypedia" id="31843">
    <property type="antibodies" value="93 antibodies from 23 providers"/>
</dbReference>
<dbReference type="DNASU" id="54933"/>
<dbReference type="Ensembl" id="ENST00000289248.6">
    <molecule id="Q9NX52-1"/>
    <property type="protein sequence ID" value="ENSP00000289248.2"/>
    <property type="gene ID" value="ENSG00000158315.11"/>
</dbReference>
<dbReference type="Ensembl" id="ENST00000372990.6">
    <molecule id="Q9NX52-1"/>
    <property type="protein sequence ID" value="ENSP00000362081.1"/>
    <property type="gene ID" value="ENSG00000158315.11"/>
</dbReference>
<dbReference type="Ensembl" id="ENST00000540558.1">
    <molecule id="Q9NX52-3"/>
    <property type="protein sequence ID" value="ENSP00000441097.1"/>
    <property type="gene ID" value="ENSG00000158315.11"/>
</dbReference>
<dbReference type="GeneID" id="54933"/>
<dbReference type="KEGG" id="hsa:54933"/>
<dbReference type="MANE-Select" id="ENST00000372990.6">
    <property type="protein sequence ID" value="ENSP00000362081.1"/>
    <property type="RefSeq nucleotide sequence ID" value="NM_017821.5"/>
    <property type="RefSeq protein sequence ID" value="NP_060291.2"/>
</dbReference>
<dbReference type="UCSC" id="uc001ccu.1">
    <molecule id="Q9NX52-1"/>
    <property type="organism name" value="human"/>
</dbReference>
<dbReference type="AGR" id="HGNC:16083"/>
<dbReference type="CTD" id="54933"/>
<dbReference type="DisGeNET" id="54933"/>
<dbReference type="GeneCards" id="RHBDL2"/>
<dbReference type="HGNC" id="HGNC:16083">
    <property type="gene designation" value="RHBDL2"/>
</dbReference>
<dbReference type="HPA" id="ENSG00000158315">
    <property type="expression patterns" value="Tissue enhanced (esophagus)"/>
</dbReference>
<dbReference type="MIM" id="608962">
    <property type="type" value="gene"/>
</dbReference>
<dbReference type="neXtProt" id="NX_Q9NX52"/>
<dbReference type="OpenTargets" id="ENSG00000158315"/>
<dbReference type="PharmGKB" id="PA34383"/>
<dbReference type="VEuPathDB" id="HostDB:ENSG00000158315"/>
<dbReference type="eggNOG" id="KOG2289">
    <property type="taxonomic scope" value="Eukaryota"/>
</dbReference>
<dbReference type="GeneTree" id="ENSGT00940000159442"/>
<dbReference type="HOGENOM" id="CLU_048023_0_0_1"/>
<dbReference type="InParanoid" id="Q9NX52"/>
<dbReference type="OMA" id="VCCDQLM"/>
<dbReference type="OrthoDB" id="418595at2759"/>
<dbReference type="PAN-GO" id="Q9NX52">
    <property type="GO annotations" value="0 GO annotations based on evolutionary models"/>
</dbReference>
<dbReference type="PhylomeDB" id="Q9NX52"/>
<dbReference type="TreeFam" id="TF313540"/>
<dbReference type="BRENDA" id="3.4.21.105">
    <property type="organism ID" value="2681"/>
</dbReference>
<dbReference type="PathwayCommons" id="Q9NX52"/>
<dbReference type="SignaLink" id="Q9NX52"/>
<dbReference type="BioGRID-ORCS" id="54933">
    <property type="hits" value="13 hits in 1139 CRISPR screens"/>
</dbReference>
<dbReference type="ChiTaRS" id="RHBDL2">
    <property type="organism name" value="human"/>
</dbReference>
<dbReference type="GenomeRNAi" id="54933"/>
<dbReference type="Pharos" id="Q9NX52">
    <property type="development level" value="Tbio"/>
</dbReference>
<dbReference type="PRO" id="PR:Q9NX52"/>
<dbReference type="Proteomes" id="UP000005640">
    <property type="component" value="Chromosome 1"/>
</dbReference>
<dbReference type="RNAct" id="Q9NX52">
    <property type="molecule type" value="protein"/>
</dbReference>
<dbReference type="Bgee" id="ENSG00000158315">
    <property type="expression patterns" value="Expressed in mucosa of sigmoid colon and 142 other cell types or tissues"/>
</dbReference>
<dbReference type="GO" id="GO:0005886">
    <property type="term" value="C:plasma membrane"/>
    <property type="evidence" value="ECO:0000314"/>
    <property type="project" value="UniProtKB"/>
</dbReference>
<dbReference type="GO" id="GO:0004252">
    <property type="term" value="F:serine-type endopeptidase activity"/>
    <property type="evidence" value="ECO:0000314"/>
    <property type="project" value="UniProtKB"/>
</dbReference>
<dbReference type="GO" id="GO:0006508">
    <property type="term" value="P:proteolysis"/>
    <property type="evidence" value="ECO:0007669"/>
    <property type="project" value="UniProtKB-KW"/>
</dbReference>
<dbReference type="FunFam" id="1.20.1540.10:FF:000007">
    <property type="entry name" value="Rhomboid like 2"/>
    <property type="match status" value="1"/>
</dbReference>
<dbReference type="Gene3D" id="1.20.1540.10">
    <property type="entry name" value="Rhomboid-like"/>
    <property type="match status" value="1"/>
</dbReference>
<dbReference type="InterPro" id="IPR022764">
    <property type="entry name" value="Peptidase_S54_rhomboid_dom"/>
</dbReference>
<dbReference type="InterPro" id="IPR017213">
    <property type="entry name" value="Peptidase_S54_rhomboid_met"/>
</dbReference>
<dbReference type="InterPro" id="IPR035952">
    <property type="entry name" value="Rhomboid-like_sf"/>
</dbReference>
<dbReference type="InterPro" id="IPR051739">
    <property type="entry name" value="Rhomboid_IM_Serine_Proteases"/>
</dbReference>
<dbReference type="PANTHER" id="PTHR45840">
    <property type="entry name" value="RHOMBOID-RELATED PROTEIN"/>
    <property type="match status" value="1"/>
</dbReference>
<dbReference type="PANTHER" id="PTHR45840:SF6">
    <property type="entry name" value="RHOMBOID-RELATED PROTEIN 2"/>
    <property type="match status" value="1"/>
</dbReference>
<dbReference type="Pfam" id="PF01694">
    <property type="entry name" value="Rhomboid"/>
    <property type="match status" value="1"/>
</dbReference>
<dbReference type="PIRSF" id="PIRSF037470">
    <property type="entry name" value="Rhomboid"/>
    <property type="match status" value="1"/>
</dbReference>
<dbReference type="SUPFAM" id="SSF144091">
    <property type="entry name" value="Rhomboid-like"/>
    <property type="match status" value="1"/>
</dbReference>
<evidence type="ECO:0000255" key="1"/>
<evidence type="ECO:0000256" key="2">
    <source>
        <dbReference type="SAM" id="MobiDB-lite"/>
    </source>
</evidence>
<evidence type="ECO:0000269" key="3">
    <source>
    </source>
</evidence>
<evidence type="ECO:0000269" key="4">
    <source>
    </source>
</evidence>
<evidence type="ECO:0000269" key="5">
    <source>
    </source>
</evidence>
<evidence type="ECO:0000303" key="6">
    <source>
    </source>
</evidence>
<evidence type="ECO:0000305" key="7"/>